<name>PHR_BUCBP</name>
<keyword id="KW-0157">Chromophore</keyword>
<keyword id="KW-0227">DNA damage</keyword>
<keyword id="KW-0234">DNA repair</keyword>
<keyword id="KW-0238">DNA-binding</keyword>
<keyword id="KW-0274">FAD</keyword>
<keyword id="KW-0285">Flavoprotein</keyword>
<keyword id="KW-0456">Lyase</keyword>
<keyword id="KW-0547">Nucleotide-binding</keyword>
<keyword id="KW-1185">Reference proteome</keyword>
<proteinExistence type="inferred from homology"/>
<dbReference type="EC" id="4.1.99.3"/>
<dbReference type="EMBL" id="AE016826">
    <property type="protein sequence ID" value="AAO27003.1"/>
    <property type="molecule type" value="Genomic_DNA"/>
</dbReference>
<dbReference type="RefSeq" id="WP_011091404.1">
    <property type="nucleotide sequence ID" value="NC_004545.1"/>
</dbReference>
<dbReference type="SMR" id="Q89AJ9"/>
<dbReference type="STRING" id="224915.bbp_278"/>
<dbReference type="KEGG" id="bab:bbp_278"/>
<dbReference type="eggNOG" id="COG0415">
    <property type="taxonomic scope" value="Bacteria"/>
</dbReference>
<dbReference type="HOGENOM" id="CLU_010348_2_0_6"/>
<dbReference type="OrthoDB" id="9772484at2"/>
<dbReference type="Proteomes" id="UP000000601">
    <property type="component" value="Chromosome"/>
</dbReference>
<dbReference type="GO" id="GO:0003904">
    <property type="term" value="F:deoxyribodipyrimidine photo-lyase activity"/>
    <property type="evidence" value="ECO:0007669"/>
    <property type="project" value="UniProtKB-EC"/>
</dbReference>
<dbReference type="GO" id="GO:0003677">
    <property type="term" value="F:DNA binding"/>
    <property type="evidence" value="ECO:0007669"/>
    <property type="project" value="UniProtKB-KW"/>
</dbReference>
<dbReference type="GO" id="GO:0071949">
    <property type="term" value="F:FAD binding"/>
    <property type="evidence" value="ECO:0007669"/>
    <property type="project" value="TreeGrafter"/>
</dbReference>
<dbReference type="GO" id="GO:0006281">
    <property type="term" value="P:DNA repair"/>
    <property type="evidence" value="ECO:0007669"/>
    <property type="project" value="UniProtKB-KW"/>
</dbReference>
<dbReference type="GO" id="GO:0009416">
    <property type="term" value="P:response to light stimulus"/>
    <property type="evidence" value="ECO:0007669"/>
    <property type="project" value="TreeGrafter"/>
</dbReference>
<dbReference type="FunFam" id="1.10.579.10:FF:000003">
    <property type="entry name" value="Deoxyribodipyrimidine photo-lyase"/>
    <property type="match status" value="1"/>
</dbReference>
<dbReference type="Gene3D" id="1.25.40.80">
    <property type="match status" value="1"/>
</dbReference>
<dbReference type="Gene3D" id="1.10.579.10">
    <property type="entry name" value="DNA Cyclobutane Dipyrimidine Photolyase, subunit A, domain 3"/>
    <property type="match status" value="1"/>
</dbReference>
<dbReference type="Gene3D" id="3.40.50.620">
    <property type="entry name" value="HUPs"/>
    <property type="match status" value="1"/>
</dbReference>
<dbReference type="InterPro" id="IPR036134">
    <property type="entry name" value="Crypto/Photolyase_FAD-like_sf"/>
</dbReference>
<dbReference type="InterPro" id="IPR036155">
    <property type="entry name" value="Crypto/Photolyase_N_sf"/>
</dbReference>
<dbReference type="InterPro" id="IPR005101">
    <property type="entry name" value="Cryptochr/Photolyase_FAD-bd"/>
</dbReference>
<dbReference type="InterPro" id="IPR002081">
    <property type="entry name" value="Cryptochrome/DNA_photolyase_1"/>
</dbReference>
<dbReference type="InterPro" id="IPR018394">
    <property type="entry name" value="DNA_photolyase_1_CS_C"/>
</dbReference>
<dbReference type="InterPro" id="IPR006050">
    <property type="entry name" value="DNA_photolyase_N"/>
</dbReference>
<dbReference type="InterPro" id="IPR014729">
    <property type="entry name" value="Rossmann-like_a/b/a_fold"/>
</dbReference>
<dbReference type="NCBIfam" id="NF007955">
    <property type="entry name" value="PRK10674.1"/>
    <property type="match status" value="1"/>
</dbReference>
<dbReference type="PANTHER" id="PTHR11455">
    <property type="entry name" value="CRYPTOCHROME"/>
    <property type="match status" value="1"/>
</dbReference>
<dbReference type="PANTHER" id="PTHR11455:SF9">
    <property type="entry name" value="CRYPTOCHROME CIRCADIAN CLOCK 5 ISOFORM X1"/>
    <property type="match status" value="1"/>
</dbReference>
<dbReference type="Pfam" id="PF00875">
    <property type="entry name" value="DNA_photolyase"/>
    <property type="match status" value="1"/>
</dbReference>
<dbReference type="Pfam" id="PF03441">
    <property type="entry name" value="FAD_binding_7"/>
    <property type="match status" value="1"/>
</dbReference>
<dbReference type="PRINTS" id="PR00147">
    <property type="entry name" value="DNAPHOTLYASE"/>
</dbReference>
<dbReference type="SUPFAM" id="SSF48173">
    <property type="entry name" value="Cryptochrome/photolyase FAD-binding domain"/>
    <property type="match status" value="1"/>
</dbReference>
<dbReference type="SUPFAM" id="SSF52425">
    <property type="entry name" value="Cryptochrome/photolyase, N-terminal domain"/>
    <property type="match status" value="1"/>
</dbReference>
<dbReference type="PROSITE" id="PS00394">
    <property type="entry name" value="DNA_PHOTOLYASES_1_1"/>
    <property type="match status" value="1"/>
</dbReference>
<dbReference type="PROSITE" id="PS00691">
    <property type="entry name" value="DNA_PHOTOLYASES_1_2"/>
    <property type="match status" value="1"/>
</dbReference>
<dbReference type="PROSITE" id="PS51645">
    <property type="entry name" value="PHR_CRY_ALPHA_BETA"/>
    <property type="match status" value="1"/>
</dbReference>
<comment type="function">
    <text evidence="1">Involved in repair of UV radiation-induced DNA damage. Catalyzes the light-dependent monomerization (300-600 nm) of cyclobutyl pyrimidine dimers (in cis-syn configuration), which are formed between adjacent bases on the same DNA strand upon exposure to ultraviolet radiation (By similarity).</text>
</comment>
<comment type="catalytic activity">
    <reaction>
        <text>cyclobutadipyrimidine (in DNA) = 2 pyrimidine residues (in DNA).</text>
        <dbReference type="EC" id="4.1.99.3"/>
    </reaction>
</comment>
<comment type="cofactor">
    <cofactor evidence="1">
        <name>FAD</name>
        <dbReference type="ChEBI" id="CHEBI:57692"/>
    </cofactor>
    <text evidence="1">Binds 1 FAD per subunit.</text>
</comment>
<comment type="cofactor">
    <cofactor evidence="2">
        <name>(6R)-5,10-methylene-5,6,7,8-tetrahydrofolate</name>
        <dbReference type="ChEBI" id="CHEBI:15636"/>
    </cofactor>
    <text evidence="2">Binds 1 5,10-methenyltetrahydrofolate (MTHF) non-covalently per subunit.</text>
</comment>
<comment type="subunit">
    <text evidence="1">Monomer.</text>
</comment>
<comment type="similarity">
    <text evidence="3">Belongs to the DNA photolyase class-1 family.</text>
</comment>
<gene>
    <name type="primary">phrB</name>
    <name type="ordered locus">bbp_278</name>
</gene>
<sequence length="478" mass="57247">MNVNLMWFRNDLRLSDNSALHFSCRNNASTVLALFIATPKQWERHCLAPKKKMLIYKNIVALKKKITELGIIFYYYESTDYLESTNYIIEFCKIHKVTSIFFNLEYEFYERQRDKIIKKKLKKNNIIINCFHDSVLITPGSIKNSYGKMYKKFSYFKYKCIKQLQLNIPSCFPKPQNKNLHDHYSLDFTIPIFHTYLEKFDANIFPIGEDIVYEKLKFFIKYAFNKYNFDQEIFELNSTSMLSAHLSIGVISPRQCVTLLFKEYPDIIHKLEECKWINELLWREFYQHLLYFYPNIGQNQSLYHWENRIKWDNNLYYLNLWKQGNTGYPIIDAGMRQLKQLGWISNRLRMITASFLVKNLLIDWRKGEEYFMSQLIDGDFASNNGNWQWIASVGTDSMPYFRIFNPMLQSKKFDINAKFIRKYIPELSNVSTYNIHNPCDNNKTNKIHSKYPQPIINYYHSKKKTLLVFKHAKCSNKL</sequence>
<accession>Q89AJ9</accession>
<evidence type="ECO:0000250" key="1"/>
<evidence type="ECO:0000250" key="2">
    <source>
        <dbReference type="UniProtKB" id="P00914"/>
    </source>
</evidence>
<evidence type="ECO:0000305" key="3"/>
<reference key="1">
    <citation type="journal article" date="2003" name="Proc. Natl. Acad. Sci. U.S.A.">
        <title>Reductive genome evolution in Buchnera aphidicola.</title>
        <authorList>
            <person name="van Ham R.C.H.J."/>
            <person name="Kamerbeek J."/>
            <person name="Palacios C."/>
            <person name="Rausell C."/>
            <person name="Abascal F."/>
            <person name="Bastolla U."/>
            <person name="Fernandez J.M."/>
            <person name="Jimenez L."/>
            <person name="Postigo M."/>
            <person name="Silva F.J."/>
            <person name="Tamames J."/>
            <person name="Viguera E."/>
            <person name="Latorre A."/>
            <person name="Valencia A."/>
            <person name="Moran F."/>
            <person name="Moya A."/>
        </authorList>
    </citation>
    <scope>NUCLEOTIDE SEQUENCE [LARGE SCALE GENOMIC DNA]</scope>
    <source>
        <strain>Bp</strain>
    </source>
</reference>
<protein>
    <recommendedName>
        <fullName>Deoxyribodipyrimidine photo-lyase</fullName>
        <ecNumber>4.1.99.3</ecNumber>
    </recommendedName>
    <alternativeName>
        <fullName>DNA photolyase</fullName>
    </alternativeName>
    <alternativeName>
        <fullName>Photoreactivating enzyme</fullName>
    </alternativeName>
</protein>
<organism>
    <name type="scientific">Buchnera aphidicola subsp. Baizongia pistaciae (strain Bp)</name>
    <dbReference type="NCBI Taxonomy" id="224915"/>
    <lineage>
        <taxon>Bacteria</taxon>
        <taxon>Pseudomonadati</taxon>
        <taxon>Pseudomonadota</taxon>
        <taxon>Gammaproteobacteria</taxon>
        <taxon>Enterobacterales</taxon>
        <taxon>Erwiniaceae</taxon>
        <taxon>Buchnera</taxon>
    </lineage>
</organism>
<feature type="chain" id="PRO_0000085107" description="Deoxyribodipyrimidine photo-lyase">
    <location>
        <begin position="1"/>
        <end position="478"/>
    </location>
</feature>
<feature type="domain" description="Photolyase/cryptochrome alpha/beta">
    <location>
        <begin position="2"/>
        <end position="136"/>
    </location>
</feature>
<feature type="region of interest" description="Interaction with DNA" evidence="1">
    <location>
        <begin position="279"/>
        <end position="286"/>
    </location>
</feature>
<feature type="region of interest" description="Interaction with DNA" evidence="1">
    <location>
        <begin position="346"/>
        <end position="347"/>
    </location>
</feature>
<feature type="binding site" evidence="2">
    <location>
        <position position="110"/>
    </location>
    <ligand>
        <name>(6R)-5,10-methylene-5,6,7,8-tetrahydrofolate</name>
        <dbReference type="ChEBI" id="CHEBI:15636"/>
    </ligand>
</feature>
<feature type="binding site" evidence="1">
    <location>
        <position position="227"/>
    </location>
    <ligand>
        <name>FAD</name>
        <dbReference type="ChEBI" id="CHEBI:57692"/>
    </ligand>
</feature>
<feature type="binding site" evidence="1">
    <location>
        <begin position="239"/>
        <end position="243"/>
    </location>
    <ligand>
        <name>FAD</name>
        <dbReference type="ChEBI" id="CHEBI:57692"/>
    </ligand>
</feature>
<feature type="binding site" evidence="1">
    <location>
        <begin position="377"/>
        <end position="379"/>
    </location>
    <ligand>
        <name>FAD</name>
        <dbReference type="ChEBI" id="CHEBI:57692"/>
    </ligand>
</feature>
<feature type="binding site" evidence="1">
    <location>
        <position position="409"/>
    </location>
    <ligand>
        <name>DNA</name>
        <dbReference type="ChEBI" id="CHEBI:16991"/>
    </ligand>
</feature>
<feature type="site" description="Electron transfer via tryptophanyl radical" evidence="1">
    <location>
        <position position="311"/>
    </location>
</feature>
<feature type="site" description="Electron transfer via tryptophanyl radical" evidence="1">
    <location>
        <position position="364"/>
    </location>
</feature>
<feature type="site" description="Electron transfer via tryptophanyl radical" evidence="1">
    <location>
        <position position="387"/>
    </location>
</feature>